<comment type="function">
    <text evidence="1">Necessary for efficient RNA polymerase transcription elongation past template-encoded arresting sites. The arresting sites in DNA have the property of trapping a certain fraction of elongating RNA polymerases that pass through, resulting in locked ternary complexes. Cleavage of the nascent transcript by cleavage factors such as GreA or GreB allows the resumption of elongation from the new 3'terminus. GreA releases sequences of 2 to 3 nucleotides.</text>
</comment>
<comment type="similarity">
    <text evidence="1">Belongs to the GreA/GreB family.</text>
</comment>
<organism>
    <name type="scientific">Bacillus licheniformis (strain ATCC 14580 / DSM 13 / JCM 2505 / CCUG 7422 / NBRC 12200 / NCIMB 9375 / NCTC 10341 / NRRL NRS-1264 / Gibson 46)</name>
    <dbReference type="NCBI Taxonomy" id="279010"/>
    <lineage>
        <taxon>Bacteria</taxon>
        <taxon>Bacillati</taxon>
        <taxon>Bacillota</taxon>
        <taxon>Bacilli</taxon>
        <taxon>Bacillales</taxon>
        <taxon>Bacillaceae</taxon>
        <taxon>Bacillus</taxon>
    </lineage>
</organism>
<accession>Q65GT4</accession>
<accession>Q62S93</accession>
<name>GREA_BACLD</name>
<evidence type="ECO:0000255" key="1">
    <source>
        <dbReference type="HAMAP-Rule" id="MF_00105"/>
    </source>
</evidence>
<dbReference type="EMBL" id="CP000002">
    <property type="protein sequence ID" value="AAU24366.1"/>
    <property type="molecule type" value="Genomic_DNA"/>
</dbReference>
<dbReference type="EMBL" id="AE017333">
    <property type="protein sequence ID" value="AAU41730.1"/>
    <property type="molecule type" value="Genomic_DNA"/>
</dbReference>
<dbReference type="RefSeq" id="WP_003183903.1">
    <property type="nucleotide sequence ID" value="NC_006322.1"/>
</dbReference>
<dbReference type="SMR" id="Q65GT4"/>
<dbReference type="STRING" id="279010.BL02024"/>
<dbReference type="GeneID" id="92860546"/>
<dbReference type="KEGG" id="bld:BLi02860"/>
<dbReference type="KEGG" id="bli:BL02024"/>
<dbReference type="eggNOG" id="COG0782">
    <property type="taxonomic scope" value="Bacteria"/>
</dbReference>
<dbReference type="HOGENOM" id="CLU_101379_2_1_9"/>
<dbReference type="Proteomes" id="UP000000606">
    <property type="component" value="Chromosome"/>
</dbReference>
<dbReference type="GO" id="GO:0003677">
    <property type="term" value="F:DNA binding"/>
    <property type="evidence" value="ECO:0007669"/>
    <property type="project" value="UniProtKB-UniRule"/>
</dbReference>
<dbReference type="GO" id="GO:0070063">
    <property type="term" value="F:RNA polymerase binding"/>
    <property type="evidence" value="ECO:0007669"/>
    <property type="project" value="InterPro"/>
</dbReference>
<dbReference type="GO" id="GO:0006354">
    <property type="term" value="P:DNA-templated transcription elongation"/>
    <property type="evidence" value="ECO:0007669"/>
    <property type="project" value="TreeGrafter"/>
</dbReference>
<dbReference type="GO" id="GO:0032784">
    <property type="term" value="P:regulation of DNA-templated transcription elongation"/>
    <property type="evidence" value="ECO:0007669"/>
    <property type="project" value="UniProtKB-UniRule"/>
</dbReference>
<dbReference type="FunFam" id="1.10.287.180:FF:000001">
    <property type="entry name" value="Transcription elongation factor GreA"/>
    <property type="match status" value="1"/>
</dbReference>
<dbReference type="FunFam" id="3.10.50.30:FF:000001">
    <property type="entry name" value="Transcription elongation factor GreA"/>
    <property type="match status" value="1"/>
</dbReference>
<dbReference type="Gene3D" id="3.10.50.30">
    <property type="entry name" value="Transcription elongation factor, GreA/GreB, C-terminal domain"/>
    <property type="match status" value="1"/>
</dbReference>
<dbReference type="Gene3D" id="1.10.287.180">
    <property type="entry name" value="Transcription elongation factor, GreA/GreB, N-terminal domain"/>
    <property type="match status" value="1"/>
</dbReference>
<dbReference type="HAMAP" id="MF_00105">
    <property type="entry name" value="GreA_GreB"/>
    <property type="match status" value="1"/>
</dbReference>
<dbReference type="InterPro" id="IPR036953">
    <property type="entry name" value="GreA/GreB_C_sf"/>
</dbReference>
<dbReference type="InterPro" id="IPR018151">
    <property type="entry name" value="TF_GreA/GreB_CS"/>
</dbReference>
<dbReference type="InterPro" id="IPR006359">
    <property type="entry name" value="Tscrpt_elong_fac_GreA"/>
</dbReference>
<dbReference type="InterPro" id="IPR028624">
    <property type="entry name" value="Tscrpt_elong_fac_GreA/B"/>
</dbReference>
<dbReference type="InterPro" id="IPR001437">
    <property type="entry name" value="Tscrpt_elong_fac_GreA/B_C"/>
</dbReference>
<dbReference type="InterPro" id="IPR023459">
    <property type="entry name" value="Tscrpt_elong_fac_GreA/B_fam"/>
</dbReference>
<dbReference type="InterPro" id="IPR022691">
    <property type="entry name" value="Tscrpt_elong_fac_GreA/B_N"/>
</dbReference>
<dbReference type="InterPro" id="IPR036805">
    <property type="entry name" value="Tscrpt_elong_fac_GreA/B_N_sf"/>
</dbReference>
<dbReference type="NCBIfam" id="TIGR01462">
    <property type="entry name" value="greA"/>
    <property type="match status" value="1"/>
</dbReference>
<dbReference type="NCBIfam" id="NF001261">
    <property type="entry name" value="PRK00226.1-2"/>
    <property type="match status" value="1"/>
</dbReference>
<dbReference type="NCBIfam" id="NF001263">
    <property type="entry name" value="PRK00226.1-4"/>
    <property type="match status" value="1"/>
</dbReference>
<dbReference type="PANTHER" id="PTHR30437">
    <property type="entry name" value="TRANSCRIPTION ELONGATION FACTOR GREA"/>
    <property type="match status" value="1"/>
</dbReference>
<dbReference type="PANTHER" id="PTHR30437:SF4">
    <property type="entry name" value="TRANSCRIPTION ELONGATION FACTOR GREA"/>
    <property type="match status" value="1"/>
</dbReference>
<dbReference type="Pfam" id="PF01272">
    <property type="entry name" value="GreA_GreB"/>
    <property type="match status" value="1"/>
</dbReference>
<dbReference type="Pfam" id="PF03449">
    <property type="entry name" value="GreA_GreB_N"/>
    <property type="match status" value="1"/>
</dbReference>
<dbReference type="PIRSF" id="PIRSF006092">
    <property type="entry name" value="GreA_GreB"/>
    <property type="match status" value="1"/>
</dbReference>
<dbReference type="SUPFAM" id="SSF54534">
    <property type="entry name" value="FKBP-like"/>
    <property type="match status" value="1"/>
</dbReference>
<dbReference type="SUPFAM" id="SSF46557">
    <property type="entry name" value="GreA transcript cleavage protein, N-terminal domain"/>
    <property type="match status" value="1"/>
</dbReference>
<dbReference type="PROSITE" id="PS00829">
    <property type="entry name" value="GREAB_1"/>
    <property type="match status" value="1"/>
</dbReference>
<dbReference type="PROSITE" id="PS00830">
    <property type="entry name" value="GREAB_2"/>
    <property type="match status" value="1"/>
</dbReference>
<reference key="1">
    <citation type="journal article" date="2004" name="J. Mol. Microbiol. Biotechnol.">
        <title>The complete genome sequence of Bacillus licheniformis DSM13, an organism with great industrial potential.</title>
        <authorList>
            <person name="Veith B."/>
            <person name="Herzberg C."/>
            <person name="Steckel S."/>
            <person name="Feesche J."/>
            <person name="Maurer K.H."/>
            <person name="Ehrenreich P."/>
            <person name="Baeumer S."/>
            <person name="Henne A."/>
            <person name="Liesegang H."/>
            <person name="Merkl R."/>
            <person name="Ehrenreich A."/>
            <person name="Gottschalk G."/>
        </authorList>
    </citation>
    <scope>NUCLEOTIDE SEQUENCE [LARGE SCALE GENOMIC DNA]</scope>
    <source>
        <strain>ATCC 14580 / DSM 13 / JCM 2505 / CCUG 7422 / NBRC 12200 / NCIMB 9375 / NCTC 10341 / NRRL NRS-1264 / Gibson 46</strain>
    </source>
</reference>
<reference key="2">
    <citation type="journal article" date="2004" name="Genome Biol.">
        <title>Complete genome sequence of the industrial bacterium Bacillus licheniformis and comparisons with closely related Bacillus species.</title>
        <authorList>
            <person name="Rey M.W."/>
            <person name="Ramaiya P."/>
            <person name="Nelson B.A."/>
            <person name="Brody-Karpin S.D."/>
            <person name="Zaretsky E.J."/>
            <person name="Tang M."/>
            <person name="Lopez de Leon A."/>
            <person name="Xiang H."/>
            <person name="Gusti V."/>
            <person name="Clausen I.G."/>
            <person name="Olsen P.B."/>
            <person name="Rasmussen M.D."/>
            <person name="Andersen J.T."/>
            <person name="Joergensen P.L."/>
            <person name="Larsen T.S."/>
            <person name="Sorokin A."/>
            <person name="Bolotin A."/>
            <person name="Lapidus A."/>
            <person name="Galleron N."/>
            <person name="Ehrlich S.D."/>
            <person name="Berka R.M."/>
        </authorList>
    </citation>
    <scope>NUCLEOTIDE SEQUENCE [LARGE SCALE GENOMIC DNA]</scope>
    <source>
        <strain>ATCC 14580 / DSM 13 / JCM 2505 / CCUG 7422 / NBRC 12200 / NCIMB 9375 / NCTC 10341 / NRRL NRS-1264 / Gibson 46</strain>
    </source>
</reference>
<sequence length="158" mass="17406">MAQEKVFPMTETGKKKLEEELEYLKTVKRKEVVERIKVARSFGDLSENSEYDSAKEEQAFVEGRITTLDNMIRNAKIIEDDGANSDIVSLGKTVTFTELPDGEEESYTIVGSAEADPFEGKISNDSPIAKSLLGKQVGDEVTVQTPGGEMLVKIVKIS</sequence>
<feature type="chain" id="PRO_1000075857" description="Transcription elongation factor GreA">
    <location>
        <begin position="1"/>
        <end position="158"/>
    </location>
</feature>
<proteinExistence type="inferred from homology"/>
<gene>
    <name evidence="1" type="primary">greA</name>
    <name type="ordered locus">BLi02860</name>
    <name type="ordered locus">BL02024</name>
</gene>
<protein>
    <recommendedName>
        <fullName evidence="1">Transcription elongation factor GreA</fullName>
    </recommendedName>
    <alternativeName>
        <fullName evidence="1">Transcript cleavage factor GreA</fullName>
    </alternativeName>
</protein>
<keyword id="KW-0238">DNA-binding</keyword>
<keyword id="KW-1185">Reference proteome</keyword>
<keyword id="KW-0804">Transcription</keyword>
<keyword id="KW-0805">Transcription regulation</keyword>